<evidence type="ECO:0000250" key="1"/>
<evidence type="ECO:0000250" key="2">
    <source>
        <dbReference type="UniProtKB" id="A2ALU4"/>
    </source>
</evidence>
<evidence type="ECO:0000250" key="3">
    <source>
        <dbReference type="UniProtKB" id="Q7TP36"/>
    </source>
</evidence>
<evidence type="ECO:0000255" key="4">
    <source>
        <dbReference type="PROSITE-ProRule" id="PRU00143"/>
    </source>
</evidence>
<evidence type="ECO:0000255" key="5">
    <source>
        <dbReference type="PROSITE-ProRule" id="PRU00637"/>
    </source>
</evidence>
<evidence type="ECO:0000255" key="6">
    <source>
        <dbReference type="PROSITE-ProRule" id="PRU00638"/>
    </source>
</evidence>
<evidence type="ECO:0000256" key="7">
    <source>
        <dbReference type="SAM" id="MobiDB-lite"/>
    </source>
</evidence>
<evidence type="ECO:0000269" key="8">
    <source>
    </source>
</evidence>
<evidence type="ECO:0000305" key="9"/>
<evidence type="ECO:0007744" key="10">
    <source>
    </source>
</evidence>
<evidence type="ECO:0007744" key="11">
    <source>
    </source>
</evidence>
<evidence type="ECO:0007829" key="12">
    <source>
        <dbReference type="PDB" id="5F4Y"/>
    </source>
</evidence>
<proteinExistence type="evidence at protein level"/>
<accession>Q13796</accession>
<accession>B9EIQ7</accession>
<dbReference type="EMBL" id="X83543">
    <property type="protein sequence ID" value="CAA58534.1"/>
    <property type="molecule type" value="mRNA"/>
</dbReference>
<dbReference type="EMBL" id="AC002365">
    <property type="protein sequence ID" value="AAC32592.1"/>
    <property type="molecule type" value="Genomic_DNA"/>
</dbReference>
<dbReference type="EMBL" id="AC090481">
    <property type="status" value="NOT_ANNOTATED_CDS"/>
    <property type="molecule type" value="Genomic_DNA"/>
</dbReference>
<dbReference type="EMBL" id="BC140866">
    <property type="protein sequence ID" value="AAI40867.1"/>
    <property type="molecule type" value="mRNA"/>
</dbReference>
<dbReference type="CCDS" id="CCDS14135.1"/>
<dbReference type="PIR" id="I37183">
    <property type="entry name" value="I37183"/>
</dbReference>
<dbReference type="RefSeq" id="NP_001307592.1">
    <property type="nucleotide sequence ID" value="NM_001320663.1"/>
</dbReference>
<dbReference type="RefSeq" id="NP_001307593.1">
    <property type="nucleotide sequence ID" value="NM_001320664.1"/>
</dbReference>
<dbReference type="RefSeq" id="NP_001640.1">
    <property type="nucleotide sequence ID" value="NM_001649.4"/>
</dbReference>
<dbReference type="PDB" id="5F4Y">
    <property type="method" value="X-ray"/>
    <property type="resolution" value="3.29 A"/>
    <property type="chains" value="A/B=1427-1610"/>
</dbReference>
<dbReference type="PDB" id="5F5P">
    <property type="method" value="X-ray"/>
    <property type="resolution" value="3.57 A"/>
    <property type="chains" value="A/B/G/H=1427-1610"/>
</dbReference>
<dbReference type="PDBsum" id="5F4Y"/>
<dbReference type="PDBsum" id="5F5P"/>
<dbReference type="SMR" id="Q13796"/>
<dbReference type="BioGRID" id="106853">
    <property type="interactions" value="21"/>
</dbReference>
<dbReference type="FunCoup" id="Q13796">
    <property type="interactions" value="139"/>
</dbReference>
<dbReference type="IntAct" id="Q13796">
    <property type="interactions" value="13"/>
</dbReference>
<dbReference type="MINT" id="Q13796"/>
<dbReference type="STRING" id="9606.ENSP00000370299"/>
<dbReference type="GlyGen" id="Q13796">
    <property type="glycosylation" value="3 sites"/>
</dbReference>
<dbReference type="iPTMnet" id="Q13796"/>
<dbReference type="PhosphoSitePlus" id="Q13796"/>
<dbReference type="BioMuta" id="SHROOM2"/>
<dbReference type="DMDM" id="2498147"/>
<dbReference type="jPOST" id="Q13796"/>
<dbReference type="MassIVE" id="Q13796"/>
<dbReference type="PaxDb" id="9606-ENSP00000370299"/>
<dbReference type="PeptideAtlas" id="Q13796"/>
<dbReference type="ProteomicsDB" id="59687"/>
<dbReference type="Pumba" id="Q13796"/>
<dbReference type="Antibodypedia" id="23655">
    <property type="antibodies" value="166 antibodies from 26 providers"/>
</dbReference>
<dbReference type="DNASU" id="357"/>
<dbReference type="Ensembl" id="ENST00000380913.8">
    <property type="protein sequence ID" value="ENSP00000370299.3"/>
    <property type="gene ID" value="ENSG00000146950.13"/>
</dbReference>
<dbReference type="GeneID" id="357"/>
<dbReference type="KEGG" id="hsa:357"/>
<dbReference type="MANE-Select" id="ENST00000380913.8">
    <property type="protein sequence ID" value="ENSP00000370299.3"/>
    <property type="RefSeq nucleotide sequence ID" value="NM_001649.4"/>
    <property type="RefSeq protein sequence ID" value="NP_001640.1"/>
</dbReference>
<dbReference type="UCSC" id="uc004csu.2">
    <property type="organism name" value="human"/>
</dbReference>
<dbReference type="AGR" id="HGNC:630"/>
<dbReference type="CTD" id="357"/>
<dbReference type="DisGeNET" id="357"/>
<dbReference type="GeneCards" id="SHROOM2"/>
<dbReference type="HGNC" id="HGNC:630">
    <property type="gene designation" value="SHROOM2"/>
</dbReference>
<dbReference type="HPA" id="ENSG00000146950">
    <property type="expression patterns" value="Tissue enhanced (retina)"/>
</dbReference>
<dbReference type="MIM" id="300103">
    <property type="type" value="gene"/>
</dbReference>
<dbReference type="neXtProt" id="NX_Q13796"/>
<dbReference type="OpenTargets" id="ENSG00000146950"/>
<dbReference type="PharmGKB" id="PA24916"/>
<dbReference type="VEuPathDB" id="HostDB:ENSG00000146950"/>
<dbReference type="eggNOG" id="ENOG502QUU2">
    <property type="taxonomic scope" value="Eukaryota"/>
</dbReference>
<dbReference type="GeneTree" id="ENSGT00940000155212"/>
<dbReference type="HOGENOM" id="CLU_003220_0_0_1"/>
<dbReference type="InParanoid" id="Q13796"/>
<dbReference type="OMA" id="AVWHTRY"/>
<dbReference type="OrthoDB" id="9534152at2759"/>
<dbReference type="PAN-GO" id="Q13796">
    <property type="GO annotations" value="5 GO annotations based on evolutionary models"/>
</dbReference>
<dbReference type="PhylomeDB" id="Q13796"/>
<dbReference type="TreeFam" id="TF333370"/>
<dbReference type="PathwayCommons" id="Q13796"/>
<dbReference type="SignaLink" id="Q13796"/>
<dbReference type="BioGRID-ORCS" id="357">
    <property type="hits" value="18 hits in 776 CRISPR screens"/>
</dbReference>
<dbReference type="ChiTaRS" id="SHROOM2">
    <property type="organism name" value="human"/>
</dbReference>
<dbReference type="GenomeRNAi" id="357"/>
<dbReference type="Pharos" id="Q13796">
    <property type="development level" value="Tbio"/>
</dbReference>
<dbReference type="PRO" id="PR:Q13796"/>
<dbReference type="Proteomes" id="UP000005640">
    <property type="component" value="Chromosome X"/>
</dbReference>
<dbReference type="RNAct" id="Q13796">
    <property type="molecule type" value="protein"/>
</dbReference>
<dbReference type="Bgee" id="ENSG00000146950">
    <property type="expression patterns" value="Expressed in middle temporal gyrus and 150 other cell types or tissues"/>
</dbReference>
<dbReference type="ExpressionAtlas" id="Q13796">
    <property type="expression patterns" value="baseline and differential"/>
</dbReference>
<dbReference type="GO" id="GO:0005912">
    <property type="term" value="C:adherens junction"/>
    <property type="evidence" value="ECO:0000250"/>
    <property type="project" value="HGNC"/>
</dbReference>
<dbReference type="GO" id="GO:0043296">
    <property type="term" value="C:apical junction complex"/>
    <property type="evidence" value="ECO:0000318"/>
    <property type="project" value="GO_Central"/>
</dbReference>
<dbReference type="GO" id="GO:0016324">
    <property type="term" value="C:apical plasma membrane"/>
    <property type="evidence" value="ECO:0000250"/>
    <property type="project" value="HGNC-UCL"/>
</dbReference>
<dbReference type="GO" id="GO:0005923">
    <property type="term" value="C:bicellular tight junction"/>
    <property type="evidence" value="ECO:0000250"/>
    <property type="project" value="UniProtKB"/>
</dbReference>
<dbReference type="GO" id="GO:0005737">
    <property type="term" value="C:cytoplasm"/>
    <property type="evidence" value="ECO:0007669"/>
    <property type="project" value="UniProtKB-KW"/>
</dbReference>
<dbReference type="GO" id="GO:0005856">
    <property type="term" value="C:cytoskeleton"/>
    <property type="evidence" value="ECO:0000250"/>
    <property type="project" value="UniProtKB"/>
</dbReference>
<dbReference type="GO" id="GO:0070062">
    <property type="term" value="C:extracellular exosome"/>
    <property type="evidence" value="ECO:0007005"/>
    <property type="project" value="UniProtKB"/>
</dbReference>
<dbReference type="GO" id="GO:0005874">
    <property type="term" value="C:microtubule"/>
    <property type="evidence" value="ECO:0007669"/>
    <property type="project" value="UniProtKB-KW"/>
</dbReference>
<dbReference type="GO" id="GO:0005886">
    <property type="term" value="C:plasma membrane"/>
    <property type="evidence" value="ECO:0000250"/>
    <property type="project" value="UniProtKB"/>
</dbReference>
<dbReference type="GO" id="GO:0003779">
    <property type="term" value="F:actin binding"/>
    <property type="evidence" value="ECO:0000250"/>
    <property type="project" value="UniProtKB"/>
</dbReference>
<dbReference type="GO" id="GO:0051015">
    <property type="term" value="F:actin filament binding"/>
    <property type="evidence" value="ECO:0000250"/>
    <property type="project" value="HGNC"/>
</dbReference>
<dbReference type="GO" id="GO:0008013">
    <property type="term" value="F:beta-catenin binding"/>
    <property type="evidence" value="ECO:0000250"/>
    <property type="project" value="HGNC"/>
</dbReference>
<dbReference type="GO" id="GO:0015280">
    <property type="term" value="F:ligand-gated sodium channel activity"/>
    <property type="evidence" value="ECO:0000304"/>
    <property type="project" value="ProtInc"/>
</dbReference>
<dbReference type="GO" id="GO:0007015">
    <property type="term" value="P:actin filament organization"/>
    <property type="evidence" value="ECO:0000318"/>
    <property type="project" value="GO_Central"/>
</dbReference>
<dbReference type="GO" id="GO:0045176">
    <property type="term" value="P:apical protein localization"/>
    <property type="evidence" value="ECO:0000250"/>
    <property type="project" value="HGNC-UCL"/>
</dbReference>
<dbReference type="GO" id="GO:0007420">
    <property type="term" value="P:brain development"/>
    <property type="evidence" value="ECO:0000250"/>
    <property type="project" value="HGNC-UCL"/>
</dbReference>
<dbReference type="GO" id="GO:0043010">
    <property type="term" value="P:camera-type eye development"/>
    <property type="evidence" value="ECO:0000250"/>
    <property type="project" value="HGNC-UCL"/>
</dbReference>
<dbReference type="GO" id="GO:0048593">
    <property type="term" value="P:camera-type eye morphogenesis"/>
    <property type="evidence" value="ECO:0000250"/>
    <property type="project" value="HGNC-UCL"/>
</dbReference>
<dbReference type="GO" id="GO:0016477">
    <property type="term" value="P:cell migration"/>
    <property type="evidence" value="ECO:0000250"/>
    <property type="project" value="UniProtKB"/>
</dbReference>
<dbReference type="GO" id="GO:0043482">
    <property type="term" value="P:cellular pigment accumulation"/>
    <property type="evidence" value="ECO:0000250"/>
    <property type="project" value="HGNC-UCL"/>
</dbReference>
<dbReference type="GO" id="GO:0043583">
    <property type="term" value="P:ear development"/>
    <property type="evidence" value="ECO:0000250"/>
    <property type="project" value="HGNC-UCL"/>
</dbReference>
<dbReference type="GO" id="GO:0032401">
    <property type="term" value="P:establishment of melanosome localization"/>
    <property type="evidence" value="ECO:0000250"/>
    <property type="project" value="HGNC-UCL"/>
</dbReference>
<dbReference type="GO" id="GO:0008057">
    <property type="term" value="P:eye pigment granule organization"/>
    <property type="evidence" value="ECO:0000250"/>
    <property type="project" value="HGNC-UCL"/>
</dbReference>
<dbReference type="GO" id="GO:0002089">
    <property type="term" value="P:lens morphogenesis in camera-type eye"/>
    <property type="evidence" value="ECO:0000250"/>
    <property type="project" value="HGNC-UCL"/>
</dbReference>
<dbReference type="GO" id="GO:0032438">
    <property type="term" value="P:melanosome organization"/>
    <property type="evidence" value="ECO:0000250"/>
    <property type="project" value="HGNC-UCL"/>
</dbReference>
<dbReference type="CDD" id="cd06750">
    <property type="entry name" value="PDZ_shroom2_3_4-like"/>
    <property type="match status" value="1"/>
</dbReference>
<dbReference type="FunFam" id="2.30.42.10:FF:000100">
    <property type="entry name" value="Shroom family member 2"/>
    <property type="match status" value="1"/>
</dbReference>
<dbReference type="Gene3D" id="2.30.42.10">
    <property type="match status" value="1"/>
</dbReference>
<dbReference type="Gene3D" id="6.10.250.3120">
    <property type="match status" value="1"/>
</dbReference>
<dbReference type="InterPro" id="IPR014800">
    <property type="entry name" value="ASD1_dom"/>
</dbReference>
<dbReference type="InterPro" id="IPR014799">
    <property type="entry name" value="ASD2_dom"/>
</dbReference>
<dbReference type="InterPro" id="IPR001478">
    <property type="entry name" value="PDZ"/>
</dbReference>
<dbReference type="InterPro" id="IPR036034">
    <property type="entry name" value="PDZ_sf"/>
</dbReference>
<dbReference type="InterPro" id="IPR027685">
    <property type="entry name" value="Shroom_fam"/>
</dbReference>
<dbReference type="PANTHER" id="PTHR15012">
    <property type="entry name" value="APICAL PROTEIN/SHROOM-RELATED"/>
    <property type="match status" value="1"/>
</dbReference>
<dbReference type="PANTHER" id="PTHR15012:SF8">
    <property type="entry name" value="PROTEIN SHROOM2"/>
    <property type="match status" value="1"/>
</dbReference>
<dbReference type="Pfam" id="PF08688">
    <property type="entry name" value="ASD1"/>
    <property type="match status" value="1"/>
</dbReference>
<dbReference type="Pfam" id="PF08687">
    <property type="entry name" value="ASD2"/>
    <property type="match status" value="1"/>
</dbReference>
<dbReference type="Pfam" id="PF00595">
    <property type="entry name" value="PDZ"/>
    <property type="match status" value="1"/>
</dbReference>
<dbReference type="SMART" id="SM00228">
    <property type="entry name" value="PDZ"/>
    <property type="match status" value="1"/>
</dbReference>
<dbReference type="SUPFAM" id="SSF50156">
    <property type="entry name" value="PDZ domain-like"/>
    <property type="match status" value="1"/>
</dbReference>
<dbReference type="PROSITE" id="PS51306">
    <property type="entry name" value="ASD1"/>
    <property type="match status" value="1"/>
</dbReference>
<dbReference type="PROSITE" id="PS51307">
    <property type="entry name" value="ASD2"/>
    <property type="match status" value="1"/>
</dbReference>
<dbReference type="PROSITE" id="PS50106">
    <property type="entry name" value="PDZ"/>
    <property type="match status" value="1"/>
</dbReference>
<comment type="function">
    <text evidence="1">May be involved in endothelial cell morphology changes during cell spreading. In the retinal pigment epithelium, may regulate the biogenesis of melanosomes and promote their association with the apical cell surface by inducing gamma-tubulin redistribution (By similarity).</text>
</comment>
<comment type="subunit">
    <text evidence="1">Interacts with F-actin.</text>
</comment>
<comment type="interaction">
    <interactant intactId="EBI-1644065">
        <id>Q13796</id>
    </interactant>
    <interactant intactId="EBI-389883">
        <id>P16333</id>
        <label>NCK1</label>
    </interactant>
    <organismsDiffer>false</organismsDiffer>
    <experiments>2</experiments>
</comment>
<comment type="subcellular location">
    <subcellularLocation>
        <location evidence="1">Apical cell membrane</location>
    </subcellularLocation>
    <subcellularLocation>
        <location evidence="1">Cell junction</location>
        <location evidence="1">Tight junction</location>
    </subcellularLocation>
    <subcellularLocation>
        <location evidence="1">Cytoplasm</location>
        <location evidence="1">Cytoskeleton</location>
    </subcellularLocation>
    <text evidence="1">Associates with cortical F-actin.</text>
</comment>
<comment type="tissue specificity">
    <text>Abundant in retina and melanoma; also in brain, placenta, lung, kidney and pancreas.</text>
</comment>
<comment type="domain">
    <text evidence="1">The ASD1 domain mediates F-actin binding.</text>
</comment>
<comment type="similarity">
    <text evidence="9">Belongs to the shroom family.</text>
</comment>
<organism>
    <name type="scientific">Homo sapiens</name>
    <name type="common">Human</name>
    <dbReference type="NCBI Taxonomy" id="9606"/>
    <lineage>
        <taxon>Eukaryota</taxon>
        <taxon>Metazoa</taxon>
        <taxon>Chordata</taxon>
        <taxon>Craniata</taxon>
        <taxon>Vertebrata</taxon>
        <taxon>Euteleostomi</taxon>
        <taxon>Mammalia</taxon>
        <taxon>Eutheria</taxon>
        <taxon>Euarchontoglires</taxon>
        <taxon>Primates</taxon>
        <taxon>Haplorrhini</taxon>
        <taxon>Catarrhini</taxon>
        <taxon>Hominidae</taxon>
        <taxon>Homo</taxon>
    </lineage>
</organism>
<name>SHRM2_HUMAN</name>
<keyword id="KW-0002">3D-structure</keyword>
<keyword id="KW-0009">Actin-binding</keyword>
<keyword id="KW-0965">Cell junction</keyword>
<keyword id="KW-1003">Cell membrane</keyword>
<keyword id="KW-0963">Cytoplasm</keyword>
<keyword id="KW-0206">Cytoskeleton</keyword>
<keyword id="KW-0217">Developmental protein</keyword>
<keyword id="KW-0472">Membrane</keyword>
<keyword id="KW-0493">Microtubule</keyword>
<keyword id="KW-0597">Phosphoprotein</keyword>
<keyword id="KW-1267">Proteomics identification</keyword>
<keyword id="KW-1185">Reference proteome</keyword>
<keyword id="KW-0796">Tight junction</keyword>
<sequence>MEGAEPRARPERLAEAETRAADGGRLVEVQLSGGAPWGFTLKGGREHGEPLVITKIEEGSKAAAVDKLLAGDEIVGINDIGLSGFRQEAICLVKGSHKTLKLVVKRRSELGWRPHSWHATKFSDSHPELAASPFTSTSGCPSWSGRHHASSSSHDLSSSWEQTNLQRTLDHFSSLGSVDSLDHPSSRLSVAKSNSSIDHLGSHSKRDSAYGSFSTSSSTPDHTLSKADTSSAENILYTVGLWEAPRQGGRQAQAAGDPQGSEEKLSCFPPRVPGDSGKGPRPEYNAEPKLAAPGRSNFGPVWYVPDKKKAPSSPPPPPPPLRSDSFAATKSHEKAQGPVFSEAAAAQHFTALAQAQPRGDRRPELTDRPWRSAHPGSLGKGSGGPGCPQEAHADGSWPPSKDGASSRLQASLSSSDVRFPQSPHSGRHPPLYSDHSPLCADSLGQEPGAASFQNDSPPQVRGLSSCDQKLGSGWQGPRPCVQGDLQAAQLWAGCWPSDTALGALESLPPPTVGQSPRHHLPQPEGPPDARETGRCYPLDKGAEGCSAGAQEPPRASRAEKASQRLAASITWADGESSRICPQETPLLHSLTQEGKRRPESSPEDSATRPPPFDAHVGKPTRRSDRFATTLRNEIQMHRAKLQKSRSTVALTAAGEAEDGTGRWRAGLGGGTQEGPLAGTYKDHLKEAQARVLRATSFKRRDLDPNPGDLYPESLEHRMGDPDTVPHFWEAGLAQPPSSTSGGPHPPRIGGRRRFTAEQKLKSYSEPEKMNEVGLTRGYSPHQHPRTSEDTVGTFADRWKFFEETSKPVPQRPAQKQALHGIPRDKPERPRTAGRTCEGTEPWSRTTSLGDSLNAHSAAEKAGTSDLPRRLGTFAEYQASWKEQRKPLEARSSGRCHSADDILDVSLDPQERPQHVHGRSRSSPSTDHYKQEASVELRRQAGDPGEPREELPSAVRAEEGQSTPRQADAQCREGSPGSQQHPPSQKAPNPPTFSELSHCRGAPELPREGRGRAGTLPRDYRYSEESTPADLGPRAQSPGSPLHARGQDSWPVSSALLSKRPAPQRPPPPKREPRRYRATDGAPADAPVGVLGRPFPTPSPASLDVYVARLSLSHSPSVFSSAQPQDTPKATVCERGSQHVSGDASRPLPEALLPPKQQHLRLQTATMETSRSPSPQFAPQKLTDKPPLLIQDEDSTRIERVMDNNTTVKMVPIKIVHSESQPEKESRQSLACPAEPPALPHGLEKDQIKTLSTSEQFYSRFCLYTRQGAEPEAPHRAQPAEPQPLGTQVPPEKDRCTSPPGLSYMKAKEKTVEDLKSEELAREIVGKDKSLADILDPSVKIKTTMDLMEGIFPKDEHLLEEAQQRRKLLPKIPSPRSTEERKEEPSVPAAVSLATNSTYYSTSAPKAELLIKMKDLQEQQEHEEDSGSDLDHDLSVKKQELIESISRKLQVLREARESLLEDVQANTVLGAEVEAIVKGVCKPSEFDKFRMFIGDLDKVVNLLLSLSGRLARVENALNNLDDGASPGDRQSLLEKQRVLIQQHEDAKELKENLDRRERIVFDILANYLSEESLADYEHFVKMKSALIIEQRELEDKIHLGEEQLKCLLDSLQPERGK</sequence>
<feature type="chain" id="PRO_0000064650" description="Protein Shroom2">
    <location>
        <begin position="1"/>
        <end position="1616"/>
    </location>
</feature>
<feature type="domain" description="PDZ" evidence="4">
    <location>
        <begin position="26"/>
        <end position="108"/>
    </location>
</feature>
<feature type="domain" description="ASD1" evidence="5">
    <location>
        <begin position="684"/>
        <end position="773"/>
    </location>
</feature>
<feature type="domain" description="ASD2" evidence="6">
    <location>
        <begin position="1317"/>
        <end position="1611"/>
    </location>
</feature>
<feature type="region of interest" description="Disordered" evidence="7">
    <location>
        <begin position="128"/>
        <end position="159"/>
    </location>
</feature>
<feature type="region of interest" description="Disordered" evidence="7">
    <location>
        <begin position="183"/>
        <end position="229"/>
    </location>
</feature>
<feature type="region of interest" description="Disordered" evidence="7">
    <location>
        <begin position="247"/>
        <end position="475"/>
    </location>
</feature>
<feature type="region of interest" description="Disordered" evidence="7">
    <location>
        <begin position="502"/>
        <end position="678"/>
    </location>
</feature>
<feature type="region of interest" description="Disordered" evidence="7">
    <location>
        <begin position="695"/>
        <end position="790"/>
    </location>
</feature>
<feature type="region of interest" description="Disordered" evidence="7">
    <location>
        <begin position="802"/>
        <end position="869"/>
    </location>
</feature>
<feature type="region of interest" description="Disordered" evidence="7">
    <location>
        <begin position="881"/>
        <end position="1100"/>
    </location>
</feature>
<feature type="region of interest" description="Disordered" evidence="7">
    <location>
        <begin position="1115"/>
        <end position="1184"/>
    </location>
</feature>
<feature type="region of interest" description="Disordered" evidence="7">
    <location>
        <begin position="1268"/>
        <end position="1302"/>
    </location>
</feature>
<feature type="region of interest" description="Disordered" evidence="7">
    <location>
        <begin position="1363"/>
        <end position="1389"/>
    </location>
</feature>
<feature type="compositionally biased region" description="Low complexity" evidence="7">
    <location>
        <begin position="150"/>
        <end position="159"/>
    </location>
</feature>
<feature type="compositionally biased region" description="Polar residues" evidence="7">
    <location>
        <begin position="186"/>
        <end position="197"/>
    </location>
</feature>
<feature type="compositionally biased region" description="Polar residues" evidence="7">
    <location>
        <begin position="220"/>
        <end position="229"/>
    </location>
</feature>
<feature type="compositionally biased region" description="Low complexity" evidence="7">
    <location>
        <begin position="247"/>
        <end position="259"/>
    </location>
</feature>
<feature type="compositionally biased region" description="Pro residues" evidence="7">
    <location>
        <begin position="312"/>
        <end position="321"/>
    </location>
</feature>
<feature type="compositionally biased region" description="Low complexity" evidence="7">
    <location>
        <begin position="343"/>
        <end position="356"/>
    </location>
</feature>
<feature type="compositionally biased region" description="Basic and acidic residues" evidence="7">
    <location>
        <begin position="358"/>
        <end position="370"/>
    </location>
</feature>
<feature type="compositionally biased region" description="Low complexity" evidence="7">
    <location>
        <begin position="405"/>
        <end position="415"/>
    </location>
</feature>
<feature type="compositionally biased region" description="Basic and acidic residues" evidence="7">
    <location>
        <begin position="754"/>
        <end position="770"/>
    </location>
</feature>
<feature type="compositionally biased region" description="Basic and acidic residues" evidence="7">
    <location>
        <begin position="821"/>
        <end position="830"/>
    </location>
</feature>
<feature type="compositionally biased region" description="Polar residues" evidence="7">
    <location>
        <begin position="842"/>
        <end position="854"/>
    </location>
</feature>
<feature type="compositionally biased region" description="Basic and acidic residues" evidence="7">
    <location>
        <begin position="926"/>
        <end position="958"/>
    </location>
</feature>
<feature type="compositionally biased region" description="Polar residues" evidence="7">
    <location>
        <begin position="975"/>
        <end position="994"/>
    </location>
</feature>
<feature type="compositionally biased region" description="Basic and acidic residues" evidence="7">
    <location>
        <begin position="1068"/>
        <end position="1077"/>
    </location>
</feature>
<feature type="compositionally biased region" description="Polar residues" evidence="7">
    <location>
        <begin position="1159"/>
        <end position="1176"/>
    </location>
</feature>
<feature type="modified residue" description="Phosphoserine" evidence="2">
    <location>
        <position position="231"/>
    </location>
</feature>
<feature type="modified residue" description="Phosphoserine" evidence="2">
    <location>
        <position position="313"/>
    </location>
</feature>
<feature type="modified residue" description="Phosphoserine" evidence="2">
    <location>
        <position position="325"/>
    </location>
</feature>
<feature type="modified residue" description="Phosphoserine" evidence="11">
    <location>
        <position position="413"/>
    </location>
</feature>
<feature type="modified residue" description="Phosphoserine" evidence="11">
    <location>
        <position position="851"/>
    </location>
</feature>
<feature type="modified residue" description="Phosphoserine" evidence="2">
    <location>
        <position position="897"/>
    </location>
</feature>
<feature type="modified residue" description="Phosphoserine" evidence="2">
    <location>
        <position position="921"/>
    </location>
</feature>
<feature type="modified residue" description="Phosphoserine" evidence="2">
    <location>
        <position position="922"/>
    </location>
</feature>
<feature type="modified residue" description="Phosphoserine" evidence="2">
    <location>
        <position position="924"/>
    </location>
</feature>
<feature type="modified residue" description="Phosphothreonine" evidence="2">
    <location>
        <position position="925"/>
    </location>
</feature>
<feature type="modified residue" description="Phosphoserine" evidence="10">
    <location>
        <position position="974"/>
    </location>
</feature>
<feature type="modified residue" description="Phosphoserine" evidence="10">
    <location>
        <position position="1036"/>
    </location>
</feature>
<feature type="modified residue" description="Phosphoserine" evidence="10 11">
    <location>
        <position position="1039"/>
    </location>
</feature>
<feature type="modified residue" description="Phosphoserine" evidence="3">
    <location>
        <position position="1171"/>
    </location>
</feature>
<feature type="modified residue" description="Phosphoserine" evidence="3">
    <location>
        <position position="1173"/>
    </location>
</feature>
<feature type="modified residue" description="Phosphoserine" evidence="2">
    <location>
        <position position="1297"/>
    </location>
</feature>
<feature type="sequence variant" id="VAR_053896" description="In dbSNP:rs16985780.">
    <original>D</original>
    <variation>E</variation>
    <location>
        <position position="942"/>
    </location>
</feature>
<feature type="sequence variant" id="VAR_036577" description="In a breast cancer sample; somatic mutation; dbSNP:rs1033602309." evidence="8">
    <original>D</original>
    <variation>H</variation>
    <location>
        <position position="1245"/>
    </location>
</feature>
<feature type="sequence variant" id="VAR_053897" description="In dbSNP:rs12012202.">
    <original>I</original>
    <variation>V</variation>
    <location>
        <position position="1475"/>
    </location>
</feature>
<feature type="sequence variant" id="VAR_024250" description="In dbSNP:rs2073942.">
    <original>L</original>
    <variation>F</variation>
    <location>
        <position position="1607"/>
    </location>
</feature>
<feature type="helix" evidence="12">
    <location>
        <begin position="1428"/>
        <end position="1436"/>
    </location>
</feature>
<feature type="helix" evidence="12">
    <location>
        <begin position="1438"/>
        <end position="1479"/>
    </location>
</feature>
<feature type="helix" evidence="12">
    <location>
        <begin position="1482"/>
        <end position="1519"/>
    </location>
</feature>
<feature type="helix" evidence="12">
    <location>
        <begin position="1527"/>
        <end position="1564"/>
    </location>
</feature>
<feature type="helix" evidence="12">
    <location>
        <begin position="1569"/>
        <end position="1604"/>
    </location>
</feature>
<protein>
    <recommendedName>
        <fullName>Protein Shroom2</fullName>
    </recommendedName>
    <alternativeName>
        <fullName>Apical-like protein</fullName>
    </alternativeName>
    <alternativeName>
        <fullName>Protein APXL</fullName>
    </alternativeName>
</protein>
<reference key="1">
    <citation type="journal article" date="1995" name="Hum. Mol. Genet.">
        <title>Cloning of a human homologue of the Xenopus laevis APX gene from the ocular albinism type 1 critical region.</title>
        <authorList>
            <person name="Schiaffino V.M."/>
            <person name="Bassi M.T."/>
            <person name="Rugarli E.I."/>
            <person name="Renieri A."/>
            <person name="Galli L."/>
            <person name="Ballabio A."/>
        </authorList>
    </citation>
    <scope>NUCLEOTIDE SEQUENCE [MRNA]</scope>
    <source>
        <tissue>Retina</tissue>
    </source>
</reference>
<reference key="2">
    <citation type="journal article" date="2005" name="Nature">
        <title>The DNA sequence of the human X chromosome.</title>
        <authorList>
            <person name="Ross M.T."/>
            <person name="Grafham D.V."/>
            <person name="Coffey A.J."/>
            <person name="Scherer S."/>
            <person name="McLay K."/>
            <person name="Muzny D."/>
            <person name="Platzer M."/>
            <person name="Howell G.R."/>
            <person name="Burrows C."/>
            <person name="Bird C.P."/>
            <person name="Frankish A."/>
            <person name="Lovell F.L."/>
            <person name="Howe K.L."/>
            <person name="Ashurst J.L."/>
            <person name="Fulton R.S."/>
            <person name="Sudbrak R."/>
            <person name="Wen G."/>
            <person name="Jones M.C."/>
            <person name="Hurles M.E."/>
            <person name="Andrews T.D."/>
            <person name="Scott C.E."/>
            <person name="Searle S."/>
            <person name="Ramser J."/>
            <person name="Whittaker A."/>
            <person name="Deadman R."/>
            <person name="Carter N.P."/>
            <person name="Hunt S.E."/>
            <person name="Chen R."/>
            <person name="Cree A."/>
            <person name="Gunaratne P."/>
            <person name="Havlak P."/>
            <person name="Hodgson A."/>
            <person name="Metzker M.L."/>
            <person name="Richards S."/>
            <person name="Scott G."/>
            <person name="Steffen D."/>
            <person name="Sodergren E."/>
            <person name="Wheeler D.A."/>
            <person name="Worley K.C."/>
            <person name="Ainscough R."/>
            <person name="Ambrose K.D."/>
            <person name="Ansari-Lari M.A."/>
            <person name="Aradhya S."/>
            <person name="Ashwell R.I."/>
            <person name="Babbage A.K."/>
            <person name="Bagguley C.L."/>
            <person name="Ballabio A."/>
            <person name="Banerjee R."/>
            <person name="Barker G.E."/>
            <person name="Barlow K.F."/>
            <person name="Barrett I.P."/>
            <person name="Bates K.N."/>
            <person name="Beare D.M."/>
            <person name="Beasley H."/>
            <person name="Beasley O."/>
            <person name="Beck A."/>
            <person name="Bethel G."/>
            <person name="Blechschmidt K."/>
            <person name="Brady N."/>
            <person name="Bray-Allen S."/>
            <person name="Bridgeman A.M."/>
            <person name="Brown A.J."/>
            <person name="Brown M.J."/>
            <person name="Bonnin D."/>
            <person name="Bruford E.A."/>
            <person name="Buhay C."/>
            <person name="Burch P."/>
            <person name="Burford D."/>
            <person name="Burgess J."/>
            <person name="Burrill W."/>
            <person name="Burton J."/>
            <person name="Bye J.M."/>
            <person name="Carder C."/>
            <person name="Carrel L."/>
            <person name="Chako J."/>
            <person name="Chapman J.C."/>
            <person name="Chavez D."/>
            <person name="Chen E."/>
            <person name="Chen G."/>
            <person name="Chen Y."/>
            <person name="Chen Z."/>
            <person name="Chinault C."/>
            <person name="Ciccodicola A."/>
            <person name="Clark S.Y."/>
            <person name="Clarke G."/>
            <person name="Clee C.M."/>
            <person name="Clegg S."/>
            <person name="Clerc-Blankenburg K."/>
            <person name="Clifford K."/>
            <person name="Cobley V."/>
            <person name="Cole C.G."/>
            <person name="Conquer J.S."/>
            <person name="Corby N."/>
            <person name="Connor R.E."/>
            <person name="David R."/>
            <person name="Davies J."/>
            <person name="Davis C."/>
            <person name="Davis J."/>
            <person name="Delgado O."/>
            <person name="Deshazo D."/>
            <person name="Dhami P."/>
            <person name="Ding Y."/>
            <person name="Dinh H."/>
            <person name="Dodsworth S."/>
            <person name="Draper H."/>
            <person name="Dugan-Rocha S."/>
            <person name="Dunham A."/>
            <person name="Dunn M."/>
            <person name="Durbin K.J."/>
            <person name="Dutta I."/>
            <person name="Eades T."/>
            <person name="Ellwood M."/>
            <person name="Emery-Cohen A."/>
            <person name="Errington H."/>
            <person name="Evans K.L."/>
            <person name="Faulkner L."/>
            <person name="Francis F."/>
            <person name="Frankland J."/>
            <person name="Fraser A.E."/>
            <person name="Galgoczy P."/>
            <person name="Gilbert J."/>
            <person name="Gill R."/>
            <person name="Gloeckner G."/>
            <person name="Gregory S.G."/>
            <person name="Gribble S."/>
            <person name="Griffiths C."/>
            <person name="Grocock R."/>
            <person name="Gu Y."/>
            <person name="Gwilliam R."/>
            <person name="Hamilton C."/>
            <person name="Hart E.A."/>
            <person name="Hawes A."/>
            <person name="Heath P.D."/>
            <person name="Heitmann K."/>
            <person name="Hennig S."/>
            <person name="Hernandez J."/>
            <person name="Hinzmann B."/>
            <person name="Ho S."/>
            <person name="Hoffs M."/>
            <person name="Howden P.J."/>
            <person name="Huckle E.J."/>
            <person name="Hume J."/>
            <person name="Hunt P.J."/>
            <person name="Hunt A.R."/>
            <person name="Isherwood J."/>
            <person name="Jacob L."/>
            <person name="Johnson D."/>
            <person name="Jones S."/>
            <person name="de Jong P.J."/>
            <person name="Joseph S.S."/>
            <person name="Keenan S."/>
            <person name="Kelly S."/>
            <person name="Kershaw J.K."/>
            <person name="Khan Z."/>
            <person name="Kioschis P."/>
            <person name="Klages S."/>
            <person name="Knights A.J."/>
            <person name="Kosiura A."/>
            <person name="Kovar-Smith C."/>
            <person name="Laird G.K."/>
            <person name="Langford C."/>
            <person name="Lawlor S."/>
            <person name="Leversha M."/>
            <person name="Lewis L."/>
            <person name="Liu W."/>
            <person name="Lloyd C."/>
            <person name="Lloyd D.M."/>
            <person name="Loulseged H."/>
            <person name="Loveland J.E."/>
            <person name="Lovell J.D."/>
            <person name="Lozado R."/>
            <person name="Lu J."/>
            <person name="Lyne R."/>
            <person name="Ma J."/>
            <person name="Maheshwari M."/>
            <person name="Matthews L.H."/>
            <person name="McDowall J."/>
            <person name="McLaren S."/>
            <person name="McMurray A."/>
            <person name="Meidl P."/>
            <person name="Meitinger T."/>
            <person name="Milne S."/>
            <person name="Miner G."/>
            <person name="Mistry S.L."/>
            <person name="Morgan M."/>
            <person name="Morris S."/>
            <person name="Mueller I."/>
            <person name="Mullikin J.C."/>
            <person name="Nguyen N."/>
            <person name="Nordsiek G."/>
            <person name="Nyakatura G."/>
            <person name="O'dell C.N."/>
            <person name="Okwuonu G."/>
            <person name="Palmer S."/>
            <person name="Pandian R."/>
            <person name="Parker D."/>
            <person name="Parrish J."/>
            <person name="Pasternak S."/>
            <person name="Patel D."/>
            <person name="Pearce A.V."/>
            <person name="Pearson D.M."/>
            <person name="Pelan S.E."/>
            <person name="Perez L."/>
            <person name="Porter K.M."/>
            <person name="Ramsey Y."/>
            <person name="Reichwald K."/>
            <person name="Rhodes S."/>
            <person name="Ridler K.A."/>
            <person name="Schlessinger D."/>
            <person name="Schueler M.G."/>
            <person name="Sehra H.K."/>
            <person name="Shaw-Smith C."/>
            <person name="Shen H."/>
            <person name="Sheridan E.M."/>
            <person name="Shownkeen R."/>
            <person name="Skuce C.D."/>
            <person name="Smith M.L."/>
            <person name="Sotheran E.C."/>
            <person name="Steingruber H.E."/>
            <person name="Steward C.A."/>
            <person name="Storey R."/>
            <person name="Swann R.M."/>
            <person name="Swarbreck D."/>
            <person name="Tabor P.E."/>
            <person name="Taudien S."/>
            <person name="Taylor T."/>
            <person name="Teague B."/>
            <person name="Thomas K."/>
            <person name="Thorpe A."/>
            <person name="Timms K."/>
            <person name="Tracey A."/>
            <person name="Trevanion S."/>
            <person name="Tromans A.C."/>
            <person name="d'Urso M."/>
            <person name="Verduzco D."/>
            <person name="Villasana D."/>
            <person name="Waldron L."/>
            <person name="Wall M."/>
            <person name="Wang Q."/>
            <person name="Warren J."/>
            <person name="Warry G.L."/>
            <person name="Wei X."/>
            <person name="West A."/>
            <person name="Whitehead S.L."/>
            <person name="Whiteley M.N."/>
            <person name="Wilkinson J.E."/>
            <person name="Willey D.L."/>
            <person name="Williams G."/>
            <person name="Williams L."/>
            <person name="Williamson A."/>
            <person name="Williamson H."/>
            <person name="Wilming L."/>
            <person name="Woodmansey R.L."/>
            <person name="Wray P.W."/>
            <person name="Yen J."/>
            <person name="Zhang J."/>
            <person name="Zhou J."/>
            <person name="Zoghbi H."/>
            <person name="Zorilla S."/>
            <person name="Buck D."/>
            <person name="Reinhardt R."/>
            <person name="Poustka A."/>
            <person name="Rosenthal A."/>
            <person name="Lehrach H."/>
            <person name="Meindl A."/>
            <person name="Minx P.J."/>
            <person name="Hillier L.W."/>
            <person name="Willard H.F."/>
            <person name="Wilson R.K."/>
            <person name="Waterston R.H."/>
            <person name="Rice C.M."/>
            <person name="Vaudin M."/>
            <person name="Coulson A."/>
            <person name="Nelson D.L."/>
            <person name="Weinstock G."/>
            <person name="Sulston J.E."/>
            <person name="Durbin R.M."/>
            <person name="Hubbard T."/>
            <person name="Gibbs R.A."/>
            <person name="Beck S."/>
            <person name="Rogers J."/>
            <person name="Bentley D.R."/>
        </authorList>
    </citation>
    <scope>NUCLEOTIDE SEQUENCE [LARGE SCALE GENOMIC DNA]</scope>
</reference>
<reference key="3">
    <citation type="journal article" date="2004" name="Genome Res.">
        <title>The status, quality, and expansion of the NIH full-length cDNA project: the Mammalian Gene Collection (MGC).</title>
        <authorList>
            <consortium name="The MGC Project Team"/>
        </authorList>
    </citation>
    <scope>NUCLEOTIDE SEQUENCE [LARGE SCALE MRNA]</scope>
</reference>
<reference key="4">
    <citation type="journal article" date="2006" name="BMC Cell Biol.">
        <title>A new standard nomenclature for proteins related to Apx and Shroom.</title>
        <authorList>
            <person name="Hagens O."/>
            <person name="Ballabio A."/>
            <person name="Kalscheuer V."/>
            <person name="Kraehenbuhl J.-P."/>
            <person name="Schiaffino M.V."/>
            <person name="Smith P."/>
            <person name="Staub O."/>
            <person name="Hildebrand J.D."/>
            <person name="Wallingford J.B."/>
        </authorList>
    </citation>
    <scope>NOMENCLATURE</scope>
</reference>
<reference key="5">
    <citation type="journal article" date="2011" name="Sci. Signal.">
        <title>System-wide temporal characterization of the proteome and phosphoproteome of human embryonic stem cell differentiation.</title>
        <authorList>
            <person name="Rigbolt K.T."/>
            <person name="Prokhorova T.A."/>
            <person name="Akimov V."/>
            <person name="Henningsen J."/>
            <person name="Johansen P.T."/>
            <person name="Kratchmarova I."/>
            <person name="Kassem M."/>
            <person name="Mann M."/>
            <person name="Olsen J.V."/>
            <person name="Blagoev B."/>
        </authorList>
    </citation>
    <scope>PHOSPHORYLATION [LARGE SCALE ANALYSIS] AT SER-974; SER-1036 AND SER-1039</scope>
    <scope>IDENTIFICATION BY MASS SPECTROMETRY [LARGE SCALE ANALYSIS]</scope>
</reference>
<reference key="6">
    <citation type="journal article" date="2014" name="J. Proteomics">
        <title>An enzyme assisted RP-RPLC approach for in-depth analysis of human liver phosphoproteome.</title>
        <authorList>
            <person name="Bian Y."/>
            <person name="Song C."/>
            <person name="Cheng K."/>
            <person name="Dong M."/>
            <person name="Wang F."/>
            <person name="Huang J."/>
            <person name="Sun D."/>
            <person name="Wang L."/>
            <person name="Ye M."/>
            <person name="Zou H."/>
        </authorList>
    </citation>
    <scope>PHOSPHORYLATION [LARGE SCALE ANALYSIS] AT SER-413; SER-851 AND SER-1039</scope>
    <scope>IDENTIFICATION BY MASS SPECTROMETRY [LARGE SCALE ANALYSIS]</scope>
    <source>
        <tissue>Liver</tissue>
    </source>
</reference>
<reference key="7">
    <citation type="journal article" date="2006" name="Science">
        <title>The consensus coding sequences of human breast and colorectal cancers.</title>
        <authorList>
            <person name="Sjoeblom T."/>
            <person name="Jones S."/>
            <person name="Wood L.D."/>
            <person name="Parsons D.W."/>
            <person name="Lin J."/>
            <person name="Barber T.D."/>
            <person name="Mandelker D."/>
            <person name="Leary R.J."/>
            <person name="Ptak J."/>
            <person name="Silliman N."/>
            <person name="Szabo S."/>
            <person name="Buckhaults P."/>
            <person name="Farrell C."/>
            <person name="Meeh P."/>
            <person name="Markowitz S.D."/>
            <person name="Willis J."/>
            <person name="Dawson D."/>
            <person name="Willson J.K.V."/>
            <person name="Gazdar A.F."/>
            <person name="Hartigan J."/>
            <person name="Wu L."/>
            <person name="Liu C."/>
            <person name="Parmigiani G."/>
            <person name="Park B.H."/>
            <person name="Bachman K.E."/>
            <person name="Papadopoulos N."/>
            <person name="Vogelstein B."/>
            <person name="Kinzler K.W."/>
            <person name="Velculescu V.E."/>
        </authorList>
    </citation>
    <scope>VARIANT [LARGE SCALE ANALYSIS] HIS-1245</scope>
</reference>
<gene>
    <name type="primary">SHROOM2</name>
    <name type="synonym">APXL</name>
</gene>